<gene>
    <name type="primary">gudD</name>
    <name type="synonym">ycbF</name>
    <name type="ordered locus">BSU02490</name>
</gene>
<proteinExistence type="inferred from homology"/>
<feature type="chain" id="PRO_0000171267" description="Probable glucarate dehydratase">
    <location>
        <begin position="1"/>
        <end position="455"/>
    </location>
</feature>
<feature type="active site" description="Proton acceptor" evidence="1">
    <location>
        <position position="217"/>
    </location>
</feature>
<feature type="active site" description="Proton acceptor" evidence="1">
    <location>
        <position position="349"/>
    </location>
</feature>
<feature type="binding site" evidence="1">
    <location>
        <position position="42"/>
    </location>
    <ligand>
        <name>substrate</name>
    </ligand>
</feature>
<feature type="binding site" evidence="1">
    <location>
        <position position="113"/>
    </location>
    <ligand>
        <name>substrate</name>
    </ligand>
</feature>
<feature type="binding site" evidence="1">
    <location>
        <position position="160"/>
    </location>
    <ligand>
        <name>substrate</name>
    </ligand>
</feature>
<feature type="binding site" evidence="1">
    <location>
        <position position="215"/>
    </location>
    <ligand>
        <name>substrate</name>
    </ligand>
</feature>
<feature type="binding site" evidence="1">
    <location>
        <begin position="245"/>
        <end position="247"/>
    </location>
    <ligand>
        <name>substrate</name>
    </ligand>
</feature>
<feature type="binding site" evidence="1">
    <location>
        <position position="245"/>
    </location>
    <ligand>
        <name>Mg(2+)</name>
        <dbReference type="ChEBI" id="CHEBI:18420"/>
    </ligand>
</feature>
<feature type="binding site" evidence="1">
    <location>
        <position position="276"/>
    </location>
    <ligand>
        <name>Mg(2+)</name>
        <dbReference type="ChEBI" id="CHEBI:18420"/>
    </ligand>
</feature>
<feature type="binding site" evidence="1">
    <location>
        <position position="299"/>
    </location>
    <ligand>
        <name>Mg(2+)</name>
        <dbReference type="ChEBI" id="CHEBI:18420"/>
    </ligand>
</feature>
<feature type="binding site" evidence="1">
    <location>
        <position position="299"/>
    </location>
    <ligand>
        <name>substrate</name>
    </ligand>
</feature>
<feature type="binding site" evidence="1">
    <location>
        <begin position="349"/>
        <end position="351"/>
    </location>
    <ligand>
        <name>substrate</name>
    </ligand>
</feature>
<feature type="binding site" evidence="1">
    <location>
        <position position="378"/>
    </location>
    <ligand>
        <name>substrate</name>
    </ligand>
</feature>
<feature type="binding site" evidence="1">
    <location>
        <position position="431"/>
    </location>
    <ligand>
        <name>substrate</name>
    </ligand>
</feature>
<feature type="sequence conflict" description="In Ref. 1; BAA06470." evidence="2" ref="1">
    <original>L</original>
    <variation>F</variation>
    <location>
        <position position="133"/>
    </location>
</feature>
<reference key="1">
    <citation type="journal article" date="1995" name="Microbiology">
        <title>Determination of a 21548 bp nucleotide sequence around the 24 degrees region of the Bacillus subtilis chromosome.</title>
        <authorList>
            <person name="Ogawa K."/>
            <person name="Akagawa E."/>
            <person name="Nakamura K."/>
            <person name="Yamane K."/>
        </authorList>
    </citation>
    <scope>NUCLEOTIDE SEQUENCE [GENOMIC DNA]</scope>
    <source>
        <strain>168</strain>
    </source>
</reference>
<reference key="2">
    <citation type="journal article" date="1997" name="Nature">
        <title>The complete genome sequence of the Gram-positive bacterium Bacillus subtilis.</title>
        <authorList>
            <person name="Kunst F."/>
            <person name="Ogasawara N."/>
            <person name="Moszer I."/>
            <person name="Albertini A.M."/>
            <person name="Alloni G."/>
            <person name="Azevedo V."/>
            <person name="Bertero M.G."/>
            <person name="Bessieres P."/>
            <person name="Bolotin A."/>
            <person name="Borchert S."/>
            <person name="Borriss R."/>
            <person name="Boursier L."/>
            <person name="Brans A."/>
            <person name="Braun M."/>
            <person name="Brignell S.C."/>
            <person name="Bron S."/>
            <person name="Brouillet S."/>
            <person name="Bruschi C.V."/>
            <person name="Caldwell B."/>
            <person name="Capuano V."/>
            <person name="Carter N.M."/>
            <person name="Choi S.-K."/>
            <person name="Codani J.-J."/>
            <person name="Connerton I.F."/>
            <person name="Cummings N.J."/>
            <person name="Daniel R.A."/>
            <person name="Denizot F."/>
            <person name="Devine K.M."/>
            <person name="Duesterhoeft A."/>
            <person name="Ehrlich S.D."/>
            <person name="Emmerson P.T."/>
            <person name="Entian K.-D."/>
            <person name="Errington J."/>
            <person name="Fabret C."/>
            <person name="Ferrari E."/>
            <person name="Foulger D."/>
            <person name="Fritz C."/>
            <person name="Fujita M."/>
            <person name="Fujita Y."/>
            <person name="Fuma S."/>
            <person name="Galizzi A."/>
            <person name="Galleron N."/>
            <person name="Ghim S.-Y."/>
            <person name="Glaser P."/>
            <person name="Goffeau A."/>
            <person name="Golightly E.J."/>
            <person name="Grandi G."/>
            <person name="Guiseppi G."/>
            <person name="Guy B.J."/>
            <person name="Haga K."/>
            <person name="Haiech J."/>
            <person name="Harwood C.R."/>
            <person name="Henaut A."/>
            <person name="Hilbert H."/>
            <person name="Holsappel S."/>
            <person name="Hosono S."/>
            <person name="Hullo M.-F."/>
            <person name="Itaya M."/>
            <person name="Jones L.-M."/>
            <person name="Joris B."/>
            <person name="Karamata D."/>
            <person name="Kasahara Y."/>
            <person name="Klaerr-Blanchard M."/>
            <person name="Klein C."/>
            <person name="Kobayashi Y."/>
            <person name="Koetter P."/>
            <person name="Koningstein G."/>
            <person name="Krogh S."/>
            <person name="Kumano M."/>
            <person name="Kurita K."/>
            <person name="Lapidus A."/>
            <person name="Lardinois S."/>
            <person name="Lauber J."/>
            <person name="Lazarevic V."/>
            <person name="Lee S.-M."/>
            <person name="Levine A."/>
            <person name="Liu H."/>
            <person name="Masuda S."/>
            <person name="Mauel C."/>
            <person name="Medigue C."/>
            <person name="Medina N."/>
            <person name="Mellado R.P."/>
            <person name="Mizuno M."/>
            <person name="Moestl D."/>
            <person name="Nakai S."/>
            <person name="Noback M."/>
            <person name="Noone D."/>
            <person name="O'Reilly M."/>
            <person name="Ogawa K."/>
            <person name="Ogiwara A."/>
            <person name="Oudega B."/>
            <person name="Park S.-H."/>
            <person name="Parro V."/>
            <person name="Pohl T.M."/>
            <person name="Portetelle D."/>
            <person name="Porwollik S."/>
            <person name="Prescott A.M."/>
            <person name="Presecan E."/>
            <person name="Pujic P."/>
            <person name="Purnelle B."/>
            <person name="Rapoport G."/>
            <person name="Rey M."/>
            <person name="Reynolds S."/>
            <person name="Rieger M."/>
            <person name="Rivolta C."/>
            <person name="Rocha E."/>
            <person name="Roche B."/>
            <person name="Rose M."/>
            <person name="Sadaie Y."/>
            <person name="Sato T."/>
            <person name="Scanlan E."/>
            <person name="Schleich S."/>
            <person name="Schroeter R."/>
            <person name="Scoffone F."/>
            <person name="Sekiguchi J."/>
            <person name="Sekowska A."/>
            <person name="Seror S.J."/>
            <person name="Serror P."/>
            <person name="Shin B.-S."/>
            <person name="Soldo B."/>
            <person name="Sorokin A."/>
            <person name="Tacconi E."/>
            <person name="Takagi T."/>
            <person name="Takahashi H."/>
            <person name="Takemaru K."/>
            <person name="Takeuchi M."/>
            <person name="Tamakoshi A."/>
            <person name="Tanaka T."/>
            <person name="Terpstra P."/>
            <person name="Tognoni A."/>
            <person name="Tosato V."/>
            <person name="Uchiyama S."/>
            <person name="Vandenbol M."/>
            <person name="Vannier F."/>
            <person name="Vassarotti A."/>
            <person name="Viari A."/>
            <person name="Wambutt R."/>
            <person name="Wedler E."/>
            <person name="Wedler H."/>
            <person name="Weitzenegger T."/>
            <person name="Winters P."/>
            <person name="Wipat A."/>
            <person name="Yamamoto H."/>
            <person name="Yamane K."/>
            <person name="Yasumoto K."/>
            <person name="Yata K."/>
            <person name="Yoshida K."/>
            <person name="Yoshikawa H.-F."/>
            <person name="Zumstein E."/>
            <person name="Yoshikawa H."/>
            <person name="Danchin A."/>
        </authorList>
    </citation>
    <scope>NUCLEOTIDE SEQUENCE [LARGE SCALE GENOMIC DNA]</scope>
    <source>
        <strain>168</strain>
    </source>
</reference>
<reference key="3">
    <citation type="journal article" date="2009" name="Microbiology">
        <title>From a consortium sequence to a unified sequence: the Bacillus subtilis 168 reference genome a decade later.</title>
        <authorList>
            <person name="Barbe V."/>
            <person name="Cruveiller S."/>
            <person name="Kunst F."/>
            <person name="Lenoble P."/>
            <person name="Meurice G."/>
            <person name="Sekowska A."/>
            <person name="Vallenet D."/>
            <person name="Wang T."/>
            <person name="Moszer I."/>
            <person name="Medigue C."/>
            <person name="Danchin A."/>
        </authorList>
    </citation>
    <scope>SEQUENCE REVISION TO 133</scope>
</reference>
<accession>P42238</accession>
<evidence type="ECO:0000250" key="1"/>
<evidence type="ECO:0000305" key="2"/>
<comment type="function">
    <text evidence="1">Catalyzes the dehydration of glucarate to 5-keto-4-deoxy-D-glucarate (5-kdGluc).</text>
</comment>
<comment type="catalytic activity">
    <reaction>
        <text>D-glucarate = 5-dehydro-4-deoxy-D-glucarate + H2O</text>
        <dbReference type="Rhea" id="RHEA:14573"/>
        <dbReference type="ChEBI" id="CHEBI:15377"/>
        <dbReference type="ChEBI" id="CHEBI:30612"/>
        <dbReference type="ChEBI" id="CHEBI:42819"/>
        <dbReference type="EC" id="4.2.1.40"/>
    </reaction>
</comment>
<comment type="cofactor">
    <cofactor evidence="1">
        <name>Mg(2+)</name>
        <dbReference type="ChEBI" id="CHEBI:18420"/>
    </cofactor>
</comment>
<comment type="pathway">
    <text>Carbohydrate acid metabolism; D-glucarate degradation; 2,5-dioxopentanoate from D-glucarate: step 1/2.</text>
</comment>
<comment type="similarity">
    <text evidence="2">Belongs to the mandelate racemase/muconate lactonizing enzyme family. GlucD subfamily.</text>
</comment>
<protein>
    <recommendedName>
        <fullName>Probable glucarate dehydratase</fullName>
        <shortName>GDH</shortName>
        <shortName>GlucD</shortName>
        <ecNumber>4.2.1.40</ecNumber>
    </recommendedName>
</protein>
<organism>
    <name type="scientific">Bacillus subtilis (strain 168)</name>
    <dbReference type="NCBI Taxonomy" id="224308"/>
    <lineage>
        <taxon>Bacteria</taxon>
        <taxon>Bacillati</taxon>
        <taxon>Bacillota</taxon>
        <taxon>Bacilli</taxon>
        <taxon>Bacillales</taxon>
        <taxon>Bacillaceae</taxon>
        <taxon>Bacillus</taxon>
    </lineage>
</organism>
<dbReference type="EC" id="4.2.1.40"/>
<dbReference type="EMBL" id="D30808">
    <property type="protein sequence ID" value="BAA06470.1"/>
    <property type="molecule type" value="Genomic_DNA"/>
</dbReference>
<dbReference type="EMBL" id="AL009126">
    <property type="protein sequence ID" value="CAB12043.2"/>
    <property type="molecule type" value="Genomic_DNA"/>
</dbReference>
<dbReference type="PIR" id="A69753">
    <property type="entry name" value="A69753"/>
</dbReference>
<dbReference type="RefSeq" id="NP_388131.2">
    <property type="nucleotide sequence ID" value="NC_000964.3"/>
</dbReference>
<dbReference type="RefSeq" id="WP_003234816.1">
    <property type="nucleotide sequence ID" value="NZ_OZ025638.1"/>
</dbReference>
<dbReference type="SMR" id="P42238"/>
<dbReference type="FunCoup" id="P42238">
    <property type="interactions" value="94"/>
</dbReference>
<dbReference type="STRING" id="224308.BSU02490"/>
<dbReference type="PaxDb" id="224308-BSU02490"/>
<dbReference type="EnsemblBacteria" id="CAB12043">
    <property type="protein sequence ID" value="CAB12043"/>
    <property type="gene ID" value="BSU_02490"/>
</dbReference>
<dbReference type="GeneID" id="938410"/>
<dbReference type="KEGG" id="bsu:BSU02490"/>
<dbReference type="PATRIC" id="fig|224308.179.peg.256"/>
<dbReference type="eggNOG" id="COG4948">
    <property type="taxonomic scope" value="Bacteria"/>
</dbReference>
<dbReference type="InParanoid" id="P42238"/>
<dbReference type="OrthoDB" id="193563at2"/>
<dbReference type="PhylomeDB" id="P42238"/>
<dbReference type="BioCyc" id="BSUB:BSU02490-MONOMER"/>
<dbReference type="UniPathway" id="UPA00564">
    <property type="reaction ID" value="UER00627"/>
</dbReference>
<dbReference type="Proteomes" id="UP000001570">
    <property type="component" value="Chromosome"/>
</dbReference>
<dbReference type="GO" id="GO:0008872">
    <property type="term" value="F:glucarate dehydratase activity"/>
    <property type="evidence" value="ECO:0000318"/>
    <property type="project" value="GO_Central"/>
</dbReference>
<dbReference type="GO" id="GO:0000287">
    <property type="term" value="F:magnesium ion binding"/>
    <property type="evidence" value="ECO:0007669"/>
    <property type="project" value="InterPro"/>
</dbReference>
<dbReference type="GO" id="GO:0042838">
    <property type="term" value="P:D-glucarate catabolic process"/>
    <property type="evidence" value="ECO:0000318"/>
    <property type="project" value="GO_Central"/>
</dbReference>
<dbReference type="CDD" id="cd03323">
    <property type="entry name" value="D-glucarate_dehydratase"/>
    <property type="match status" value="1"/>
</dbReference>
<dbReference type="FunFam" id="3.20.20.120:FF:000003">
    <property type="entry name" value="Glucarate dehydratase"/>
    <property type="match status" value="1"/>
</dbReference>
<dbReference type="Gene3D" id="3.20.20.120">
    <property type="entry name" value="Enolase-like C-terminal domain"/>
    <property type="match status" value="1"/>
</dbReference>
<dbReference type="Gene3D" id="3.30.390.10">
    <property type="entry name" value="Enolase-like, N-terminal domain"/>
    <property type="match status" value="1"/>
</dbReference>
<dbReference type="InterPro" id="IPR034593">
    <property type="entry name" value="DgoD-like"/>
</dbReference>
<dbReference type="InterPro" id="IPR036849">
    <property type="entry name" value="Enolase-like_C_sf"/>
</dbReference>
<dbReference type="InterPro" id="IPR029017">
    <property type="entry name" value="Enolase-like_N"/>
</dbReference>
<dbReference type="InterPro" id="IPR029065">
    <property type="entry name" value="Enolase_C-like"/>
</dbReference>
<dbReference type="InterPro" id="IPR017653">
    <property type="entry name" value="Glucarate_dehydratase"/>
</dbReference>
<dbReference type="InterPro" id="IPR034598">
    <property type="entry name" value="GlucD-like"/>
</dbReference>
<dbReference type="InterPro" id="IPR013342">
    <property type="entry name" value="Mandelate_racemase_C"/>
</dbReference>
<dbReference type="NCBIfam" id="TIGR03247">
    <property type="entry name" value="glucar-dehydr"/>
    <property type="match status" value="1"/>
</dbReference>
<dbReference type="PANTHER" id="PTHR48080">
    <property type="entry name" value="D-GALACTONATE DEHYDRATASE-RELATED"/>
    <property type="match status" value="1"/>
</dbReference>
<dbReference type="PANTHER" id="PTHR48080:SF4">
    <property type="entry name" value="GLUCARATE DEHYDRATASE"/>
    <property type="match status" value="1"/>
</dbReference>
<dbReference type="Pfam" id="PF13378">
    <property type="entry name" value="MR_MLE_C"/>
    <property type="match status" value="1"/>
</dbReference>
<dbReference type="SFLD" id="SFLDS00001">
    <property type="entry name" value="Enolase"/>
    <property type="match status" value="1"/>
</dbReference>
<dbReference type="SFLD" id="SFLDF00005">
    <property type="entry name" value="glucarate_dehydratase"/>
    <property type="match status" value="1"/>
</dbReference>
<dbReference type="SMART" id="SM00922">
    <property type="entry name" value="MR_MLE"/>
    <property type="match status" value="1"/>
</dbReference>
<dbReference type="SUPFAM" id="SSF51604">
    <property type="entry name" value="Enolase C-terminal domain-like"/>
    <property type="match status" value="1"/>
</dbReference>
<dbReference type="SUPFAM" id="SSF54826">
    <property type="entry name" value="Enolase N-terminal domain-like"/>
    <property type="match status" value="1"/>
</dbReference>
<name>GUDD_BACSU</name>
<sequence length="455" mass="50749">MSSPIQEQVQKEKRSNIPSISEMKVIPVAGHDSMLLNLSGAHSPFFTRNIVILTDSSGNQGVGEVPGGEHIRRTLELSEPLVVGKSIGAYQAILQTVRKQFGDQDRGGRGNQTFDLRTTVHAVTALEAALLDLLGKFLQEPVAALLGEGKQRDEVKMLGYLFYIGDRNRTTLPYQSDEQSDCAWFRLRHEEALTPEAIVRLAESAQERYGFQDFKLKGGVLRGEEEIEAVTALSKRFPEARITLDPNGAWSLEEAIALCKGKQDVLAYAEDPCGDENGYSAREVMAEFRRATGLPTATNMIATDWREMGHAIQLHAVDIPLADPHFWTMQGSVRVAQMCHDWGLTWGSHSNNHFDISLAMFTHVAAAAPGRITAIDTHWIWQDGQRLTKQPFEISSGCVKVPDKPGLGVDIDMEQVEKAHEIYRKMNLGARNDAIPMQFLISNWEFDRKRPCLVR</sequence>
<keyword id="KW-0456">Lyase</keyword>
<keyword id="KW-0460">Magnesium</keyword>
<keyword id="KW-0479">Metal-binding</keyword>
<keyword id="KW-1185">Reference proteome</keyword>